<protein>
    <recommendedName>
        <fullName evidence="1">Ribosomal RNA small subunit methyltransferase H</fullName>
        <ecNumber evidence="1">2.1.1.199</ecNumber>
    </recommendedName>
    <alternativeName>
        <fullName evidence="1">16S rRNA m(4)C1402 methyltransferase</fullName>
    </alternativeName>
    <alternativeName>
        <fullName evidence="1">rRNA (cytosine-N(4)-)-methyltransferase RsmH</fullName>
    </alternativeName>
</protein>
<keyword id="KW-0963">Cytoplasm</keyword>
<keyword id="KW-0489">Methyltransferase</keyword>
<keyword id="KW-0698">rRNA processing</keyword>
<keyword id="KW-0949">S-adenosyl-L-methionine</keyword>
<keyword id="KW-0808">Transferase</keyword>
<comment type="function">
    <text evidence="1">Specifically methylates the N4 position of cytidine in position 1402 (C1402) of 16S rRNA.</text>
</comment>
<comment type="catalytic activity">
    <reaction evidence="1">
        <text>cytidine(1402) in 16S rRNA + S-adenosyl-L-methionine = N(4)-methylcytidine(1402) in 16S rRNA + S-adenosyl-L-homocysteine + H(+)</text>
        <dbReference type="Rhea" id="RHEA:42928"/>
        <dbReference type="Rhea" id="RHEA-COMP:10286"/>
        <dbReference type="Rhea" id="RHEA-COMP:10287"/>
        <dbReference type="ChEBI" id="CHEBI:15378"/>
        <dbReference type="ChEBI" id="CHEBI:57856"/>
        <dbReference type="ChEBI" id="CHEBI:59789"/>
        <dbReference type="ChEBI" id="CHEBI:74506"/>
        <dbReference type="ChEBI" id="CHEBI:82748"/>
        <dbReference type="EC" id="2.1.1.199"/>
    </reaction>
</comment>
<comment type="subcellular location">
    <subcellularLocation>
        <location evidence="1">Cytoplasm</location>
    </subcellularLocation>
</comment>
<comment type="similarity">
    <text evidence="1">Belongs to the methyltransferase superfamily. RsmH family.</text>
</comment>
<reference key="1">
    <citation type="journal article" date="2006" name="Proc. Natl. Acad. Sci. U.S.A.">
        <title>The complete genome of Rhodococcus sp. RHA1 provides insights into a catabolic powerhouse.</title>
        <authorList>
            <person name="McLeod M.P."/>
            <person name="Warren R.L."/>
            <person name="Hsiao W.W.L."/>
            <person name="Araki N."/>
            <person name="Myhre M."/>
            <person name="Fernandes C."/>
            <person name="Miyazawa D."/>
            <person name="Wong W."/>
            <person name="Lillquist A.L."/>
            <person name="Wang D."/>
            <person name="Dosanjh M."/>
            <person name="Hara H."/>
            <person name="Petrescu A."/>
            <person name="Morin R.D."/>
            <person name="Yang G."/>
            <person name="Stott J.M."/>
            <person name="Schein J.E."/>
            <person name="Shin H."/>
            <person name="Smailus D."/>
            <person name="Siddiqui A.S."/>
            <person name="Marra M.A."/>
            <person name="Jones S.J.M."/>
            <person name="Holt R."/>
            <person name="Brinkman F.S.L."/>
            <person name="Miyauchi K."/>
            <person name="Fukuda M."/>
            <person name="Davies J.E."/>
            <person name="Mohn W.W."/>
            <person name="Eltis L.D."/>
        </authorList>
    </citation>
    <scope>NUCLEOTIDE SEQUENCE [LARGE SCALE GENOMIC DNA]</scope>
    <source>
        <strain>RHA1</strain>
    </source>
</reference>
<evidence type="ECO:0000255" key="1">
    <source>
        <dbReference type="HAMAP-Rule" id="MF_01007"/>
    </source>
</evidence>
<evidence type="ECO:0000256" key="2">
    <source>
        <dbReference type="SAM" id="MobiDB-lite"/>
    </source>
</evidence>
<feature type="chain" id="PRO_0000387078" description="Ribosomal RNA small subunit methyltransferase H">
    <location>
        <begin position="1"/>
        <end position="338"/>
    </location>
</feature>
<feature type="region of interest" description="Disordered" evidence="2">
    <location>
        <begin position="276"/>
        <end position="297"/>
    </location>
</feature>
<feature type="region of interest" description="Disordered" evidence="2">
    <location>
        <begin position="304"/>
        <end position="323"/>
    </location>
</feature>
<feature type="binding site" evidence="1">
    <location>
        <begin position="53"/>
        <end position="55"/>
    </location>
    <ligand>
        <name>S-adenosyl-L-methionine</name>
        <dbReference type="ChEBI" id="CHEBI:59789"/>
    </ligand>
</feature>
<feature type="binding site" evidence="1">
    <location>
        <position position="72"/>
    </location>
    <ligand>
        <name>S-adenosyl-L-methionine</name>
        <dbReference type="ChEBI" id="CHEBI:59789"/>
    </ligand>
</feature>
<feature type="binding site" evidence="1">
    <location>
        <position position="99"/>
    </location>
    <ligand>
        <name>S-adenosyl-L-methionine</name>
        <dbReference type="ChEBI" id="CHEBI:59789"/>
    </ligand>
</feature>
<feature type="binding site" evidence="1">
    <location>
        <position position="123"/>
    </location>
    <ligand>
        <name>S-adenosyl-L-methionine</name>
        <dbReference type="ChEBI" id="CHEBI:59789"/>
    </ligand>
</feature>
<feature type="binding site" evidence="1">
    <location>
        <position position="130"/>
    </location>
    <ligand>
        <name>S-adenosyl-L-methionine</name>
        <dbReference type="ChEBI" id="CHEBI:59789"/>
    </ligand>
</feature>
<proteinExistence type="inferred from homology"/>
<gene>
    <name evidence="1" type="primary">rsmH</name>
    <name type="synonym">mraW</name>
    <name type="ordered locus">RHA1_ro01096</name>
</gene>
<sequence length="338" mass="36648">MVDHEGEDSSPTDGFGHIPVLLHRADELLGPALTVNDPQGGGAVMIDATLGLGGHSEHFLRTYPQLRLIALDRDPHALEIAGGRLAPFADRITFVHTRYDGIEDALDQAGLPAQESVHGILFDLGVSSMQLDESDRGFAYSIDAPLDMRMDPTTGITAAEVLNTYSHGDLARILSTYGEERFAGKIASEIVRQRAKEPFTTSAALVELLYRSIPAATRRTGGHPAKRTFQALRVEVNGELDSLRAAVPAALDALTVGGRVVFMSYQSLEDRVVKQEITPRSKSKSPEGLPVELPGMGPEFRILTRGAERASEQEVEENPRSAPVRLRAAERIARRSAA</sequence>
<organism>
    <name type="scientific">Rhodococcus jostii (strain RHA1)</name>
    <dbReference type="NCBI Taxonomy" id="101510"/>
    <lineage>
        <taxon>Bacteria</taxon>
        <taxon>Bacillati</taxon>
        <taxon>Actinomycetota</taxon>
        <taxon>Actinomycetes</taxon>
        <taxon>Mycobacteriales</taxon>
        <taxon>Nocardiaceae</taxon>
        <taxon>Rhodococcus</taxon>
    </lineage>
</organism>
<dbReference type="EC" id="2.1.1.199" evidence="1"/>
<dbReference type="EMBL" id="CP000431">
    <property type="protein sequence ID" value="ABG92923.1"/>
    <property type="molecule type" value="Genomic_DNA"/>
</dbReference>
<dbReference type="RefSeq" id="WP_009473744.1">
    <property type="nucleotide sequence ID" value="NC_008268.1"/>
</dbReference>
<dbReference type="SMR" id="Q0SHR3"/>
<dbReference type="KEGG" id="rha:RHA1_ro01096"/>
<dbReference type="eggNOG" id="COG0275">
    <property type="taxonomic scope" value="Bacteria"/>
</dbReference>
<dbReference type="HOGENOM" id="CLU_038422_0_0_11"/>
<dbReference type="OrthoDB" id="9806637at2"/>
<dbReference type="Proteomes" id="UP000008710">
    <property type="component" value="Chromosome"/>
</dbReference>
<dbReference type="GO" id="GO:0005737">
    <property type="term" value="C:cytoplasm"/>
    <property type="evidence" value="ECO:0007669"/>
    <property type="project" value="UniProtKB-SubCell"/>
</dbReference>
<dbReference type="GO" id="GO:0071424">
    <property type="term" value="F:rRNA (cytosine-N4-)-methyltransferase activity"/>
    <property type="evidence" value="ECO:0007669"/>
    <property type="project" value="UniProtKB-UniRule"/>
</dbReference>
<dbReference type="GO" id="GO:0070475">
    <property type="term" value="P:rRNA base methylation"/>
    <property type="evidence" value="ECO:0007669"/>
    <property type="project" value="UniProtKB-UniRule"/>
</dbReference>
<dbReference type="FunFam" id="1.10.150.170:FF:000001">
    <property type="entry name" value="Ribosomal RNA small subunit methyltransferase H"/>
    <property type="match status" value="1"/>
</dbReference>
<dbReference type="Gene3D" id="1.10.150.170">
    <property type="entry name" value="Putative methyltransferase TM0872, insert domain"/>
    <property type="match status" value="1"/>
</dbReference>
<dbReference type="Gene3D" id="3.40.50.150">
    <property type="entry name" value="Vaccinia Virus protein VP39"/>
    <property type="match status" value="1"/>
</dbReference>
<dbReference type="HAMAP" id="MF_01007">
    <property type="entry name" value="16SrRNA_methyltr_H"/>
    <property type="match status" value="1"/>
</dbReference>
<dbReference type="InterPro" id="IPR002903">
    <property type="entry name" value="RsmH"/>
</dbReference>
<dbReference type="InterPro" id="IPR023397">
    <property type="entry name" value="SAM-dep_MeTrfase_MraW_recog"/>
</dbReference>
<dbReference type="InterPro" id="IPR029063">
    <property type="entry name" value="SAM-dependent_MTases_sf"/>
</dbReference>
<dbReference type="NCBIfam" id="TIGR00006">
    <property type="entry name" value="16S rRNA (cytosine(1402)-N(4))-methyltransferase RsmH"/>
    <property type="match status" value="1"/>
</dbReference>
<dbReference type="PANTHER" id="PTHR11265:SF0">
    <property type="entry name" value="12S RRNA N4-METHYLCYTIDINE METHYLTRANSFERASE"/>
    <property type="match status" value="1"/>
</dbReference>
<dbReference type="PANTHER" id="PTHR11265">
    <property type="entry name" value="S-ADENOSYL-METHYLTRANSFERASE MRAW"/>
    <property type="match status" value="1"/>
</dbReference>
<dbReference type="Pfam" id="PF01795">
    <property type="entry name" value="Methyltransf_5"/>
    <property type="match status" value="1"/>
</dbReference>
<dbReference type="PIRSF" id="PIRSF004486">
    <property type="entry name" value="MraW"/>
    <property type="match status" value="1"/>
</dbReference>
<dbReference type="SUPFAM" id="SSF81799">
    <property type="entry name" value="Putative methyltransferase TM0872, insert domain"/>
    <property type="match status" value="1"/>
</dbReference>
<dbReference type="SUPFAM" id="SSF53335">
    <property type="entry name" value="S-adenosyl-L-methionine-dependent methyltransferases"/>
    <property type="match status" value="1"/>
</dbReference>
<accession>Q0SHR3</accession>
<name>RSMH_RHOJR</name>